<comment type="function">
    <text evidence="1">Involved in the import of serine and threonine into the cell, with the concomitant import of sodium (symport system).</text>
</comment>
<comment type="catalytic activity">
    <reaction evidence="1">
        <text>L-serine(in) + Na(+)(in) = L-serine(out) + Na(+)(out)</text>
        <dbReference type="Rhea" id="RHEA:29575"/>
        <dbReference type="ChEBI" id="CHEBI:29101"/>
        <dbReference type="ChEBI" id="CHEBI:33384"/>
    </reaction>
    <physiologicalReaction direction="right-to-left" evidence="1">
        <dbReference type="Rhea" id="RHEA:29577"/>
    </physiologicalReaction>
</comment>
<comment type="catalytic activity">
    <reaction evidence="1">
        <text>L-threonine(in) + Na(+)(in) = L-threonine(out) + Na(+)(out)</text>
        <dbReference type="Rhea" id="RHEA:69999"/>
        <dbReference type="ChEBI" id="CHEBI:29101"/>
        <dbReference type="ChEBI" id="CHEBI:57926"/>
    </reaction>
    <physiologicalReaction direction="right-to-left" evidence="1">
        <dbReference type="Rhea" id="RHEA:70001"/>
    </physiologicalReaction>
</comment>
<comment type="subcellular location">
    <subcellularLocation>
        <location evidence="1">Cell inner membrane</location>
        <topology evidence="1">Multi-pass membrane protein</topology>
    </subcellularLocation>
</comment>
<comment type="similarity">
    <text evidence="1">Belongs to the dicarboxylate/amino acid:cation symporter (DAACS) (TC 2.A.23) family.</text>
</comment>
<reference key="1">
    <citation type="journal article" date="2005" name="PLoS Biol.">
        <title>Major structural differences and novel potential virulence mechanisms from the genomes of multiple Campylobacter species.</title>
        <authorList>
            <person name="Fouts D.E."/>
            <person name="Mongodin E.F."/>
            <person name="Mandrell R.E."/>
            <person name="Miller W.G."/>
            <person name="Rasko D.A."/>
            <person name="Ravel J."/>
            <person name="Brinkac L.M."/>
            <person name="DeBoy R.T."/>
            <person name="Parker C.T."/>
            <person name="Daugherty S.C."/>
            <person name="Dodson R.J."/>
            <person name="Durkin A.S."/>
            <person name="Madupu R."/>
            <person name="Sullivan S.A."/>
            <person name="Shetty J.U."/>
            <person name="Ayodeji M.A."/>
            <person name="Shvartsbeyn A."/>
            <person name="Schatz M.C."/>
            <person name="Badger J.H."/>
            <person name="Fraser C.M."/>
            <person name="Nelson K.E."/>
        </authorList>
    </citation>
    <scope>NUCLEOTIDE SEQUENCE [LARGE SCALE GENOMIC DNA]</scope>
    <source>
        <strain>RM1221</strain>
    </source>
</reference>
<keyword id="KW-0029">Amino-acid transport</keyword>
<keyword id="KW-0997">Cell inner membrane</keyword>
<keyword id="KW-1003">Cell membrane</keyword>
<keyword id="KW-0472">Membrane</keyword>
<keyword id="KW-0769">Symport</keyword>
<keyword id="KW-0812">Transmembrane</keyword>
<keyword id="KW-1133">Transmembrane helix</keyword>
<keyword id="KW-0813">Transport</keyword>
<evidence type="ECO:0000255" key="1">
    <source>
        <dbReference type="HAMAP-Rule" id="MF_01582"/>
    </source>
</evidence>
<proteinExistence type="inferred from homology"/>
<accession>Q5HU07</accession>
<organism>
    <name type="scientific">Campylobacter jejuni (strain RM1221)</name>
    <dbReference type="NCBI Taxonomy" id="195099"/>
    <lineage>
        <taxon>Bacteria</taxon>
        <taxon>Pseudomonadati</taxon>
        <taxon>Campylobacterota</taxon>
        <taxon>Epsilonproteobacteria</taxon>
        <taxon>Campylobacterales</taxon>
        <taxon>Campylobacteraceae</taxon>
        <taxon>Campylobacter</taxon>
    </lineage>
</organism>
<gene>
    <name evidence="1" type="primary">sstT</name>
    <name type="ordered locus">CJE1240</name>
</gene>
<feature type="chain" id="PRO_0000309078" description="Serine/threonine transporter SstT">
    <location>
        <begin position="1"/>
        <end position="407"/>
    </location>
</feature>
<feature type="transmembrane region" description="Helical" evidence="1">
    <location>
        <begin position="12"/>
        <end position="32"/>
    </location>
</feature>
<feature type="transmembrane region" description="Helical" evidence="1">
    <location>
        <begin position="42"/>
        <end position="62"/>
    </location>
</feature>
<feature type="transmembrane region" description="Helical" evidence="1">
    <location>
        <begin position="81"/>
        <end position="101"/>
    </location>
</feature>
<feature type="transmembrane region" description="Helical" evidence="1">
    <location>
        <begin position="141"/>
        <end position="161"/>
    </location>
</feature>
<feature type="transmembrane region" description="Helical" evidence="1">
    <location>
        <begin position="179"/>
        <end position="199"/>
    </location>
</feature>
<feature type="transmembrane region" description="Helical" evidence="1">
    <location>
        <begin position="218"/>
        <end position="238"/>
    </location>
</feature>
<feature type="transmembrane region" description="Helical" evidence="1">
    <location>
        <begin position="245"/>
        <end position="267"/>
    </location>
</feature>
<feature type="transmembrane region" description="Helical" evidence="1">
    <location>
        <begin position="288"/>
        <end position="308"/>
    </location>
</feature>
<feature type="transmembrane region" description="Helical" evidence="1">
    <location>
        <begin position="330"/>
        <end position="350"/>
    </location>
</feature>
<name>SSTT_CAMJR</name>
<sequence length="407" mass="43270">MFSKIIQSYAKGNLIVQICIGIALGILIGISSKEISEIANLLGILFTSALKAIAPMLVFILILTSICTKDFSQSGAKIKNIIILYIVGTFFASACAVLANFFFPVKLVLDGVQTATNSSPTHMSDIFKDLLFKIVDNPINALSSGNYLGILTWAIAGGIALKHCSNEAKQVFIDINEGVLKIVKFVVKLAPFGIFGLVANSVAQTGAQGLLSYVKLLILLVATMLFVTFVINALIVFFYTRKNPFPLIFICLRHSAFFAFFTRSSAANIPVNMALCAKLGIDKEFYGISIPLGATINMAGAAVTIAILSLTAANTVGIEISLLQAFLLSIIATFAACGASGVAGGSLLLIPLACSLFNIDYDIAMKVVAIGFIIGVIQDSVETALNSSTDVLFTAICSKNELNYNIK</sequence>
<dbReference type="EMBL" id="CP000025">
    <property type="protein sequence ID" value="AAW35562.1"/>
    <property type="molecule type" value="Genomic_DNA"/>
</dbReference>
<dbReference type="PIR" id="D81313">
    <property type="entry name" value="D81313"/>
</dbReference>
<dbReference type="RefSeq" id="WP_002858067.1">
    <property type="nucleotide sequence ID" value="NC_003912.7"/>
</dbReference>
<dbReference type="SMR" id="Q5HU07"/>
<dbReference type="KEGG" id="cjr:CJE1240"/>
<dbReference type="HOGENOM" id="CLU_044581_0_0_7"/>
<dbReference type="GO" id="GO:0005886">
    <property type="term" value="C:plasma membrane"/>
    <property type="evidence" value="ECO:0007669"/>
    <property type="project" value="UniProtKB-SubCell"/>
</dbReference>
<dbReference type="GO" id="GO:0005295">
    <property type="term" value="F:neutral L-amino acid:sodium symporter activity"/>
    <property type="evidence" value="ECO:0007669"/>
    <property type="project" value="TreeGrafter"/>
</dbReference>
<dbReference type="GO" id="GO:0032329">
    <property type="term" value="P:serine transport"/>
    <property type="evidence" value="ECO:0007669"/>
    <property type="project" value="InterPro"/>
</dbReference>
<dbReference type="GO" id="GO:0015826">
    <property type="term" value="P:threonine transport"/>
    <property type="evidence" value="ECO:0007669"/>
    <property type="project" value="InterPro"/>
</dbReference>
<dbReference type="Gene3D" id="1.10.3860.10">
    <property type="entry name" value="Sodium:dicarboxylate symporter"/>
    <property type="match status" value="1"/>
</dbReference>
<dbReference type="HAMAP" id="MF_01582">
    <property type="entry name" value="Ser_Thr_transp_SstT"/>
    <property type="match status" value="1"/>
</dbReference>
<dbReference type="InterPro" id="IPR001991">
    <property type="entry name" value="Na-dicarboxylate_symporter"/>
</dbReference>
<dbReference type="InterPro" id="IPR036458">
    <property type="entry name" value="Na:dicarbo_symporter_sf"/>
</dbReference>
<dbReference type="InterPro" id="IPR023025">
    <property type="entry name" value="Ser_Thr_transp_SstT"/>
</dbReference>
<dbReference type="NCBIfam" id="NF010151">
    <property type="entry name" value="PRK13628.1"/>
    <property type="match status" value="1"/>
</dbReference>
<dbReference type="PANTHER" id="PTHR42865">
    <property type="entry name" value="PROTON/GLUTAMATE-ASPARTATE SYMPORTER"/>
    <property type="match status" value="1"/>
</dbReference>
<dbReference type="PANTHER" id="PTHR42865:SF8">
    <property type="entry name" value="SERINE_THREONINE TRANSPORTER SSTT"/>
    <property type="match status" value="1"/>
</dbReference>
<dbReference type="Pfam" id="PF00375">
    <property type="entry name" value="SDF"/>
    <property type="match status" value="1"/>
</dbReference>
<dbReference type="PRINTS" id="PR00173">
    <property type="entry name" value="EDTRNSPORT"/>
</dbReference>
<dbReference type="SUPFAM" id="SSF118215">
    <property type="entry name" value="Proton glutamate symport protein"/>
    <property type="match status" value="1"/>
</dbReference>
<protein>
    <recommendedName>
        <fullName evidence="1">Serine/threonine transporter SstT</fullName>
    </recommendedName>
    <alternativeName>
        <fullName evidence="1">Na(+)/serine-threonine symporter</fullName>
    </alternativeName>
</protein>